<keyword id="KW-0183">Conidiation</keyword>
<keyword id="KW-0238">DNA-binding</keyword>
<keyword id="KW-0539">Nucleus</keyword>
<keyword id="KW-1185">Reference proteome</keyword>
<keyword id="KW-0749">Sporulation</keyword>
<keyword id="KW-0804">Transcription</keyword>
<keyword id="KW-0805">Transcription regulation</keyword>
<protein>
    <recommendedName>
        <fullName evidence="7">Cell pattern formation-associated protein asm-1</fullName>
    </recommendedName>
    <alternativeName>
        <fullName evidence="6">Ascospore maturation protein 1</fullName>
    </alternativeName>
</protein>
<comment type="function">
    <text evidence="1 4 5">Transcription factor that regulates asexual reproduction (PubMed:25550299, PubMed:8913744). Binds the StuA-response elements (StRE) with the consensus sequence 5'-(A/T)CGCG(T/A)N(A/C)-3' at the promoters of target genes (By similarity). Required for rapid conidial germination, normal vegetative morphology, and protoperithecium formation (PubMed:8913744).</text>
</comment>
<comment type="subcellular location">
    <subcellularLocation>
        <location evidence="5">Nucleus</location>
    </subcellularLocation>
</comment>
<comment type="induction">
    <text evidence="5">Constitutively expressed during the mycelial, conidial, and perithecial stages of the life cycle (PubMed:8913744).</text>
</comment>
<comment type="disruption phenotype">
    <text evidence="5">Destroys the ability to make protoperithecia (female organs), but does not affect male-specific functions (PubMed:8913744).</text>
</comment>
<comment type="similarity">
    <text evidence="7">Belongs to the EFG1/PHD1/stuA family.</text>
</comment>
<gene>
    <name evidence="6" type="primary">Asm-1</name>
    <name type="ORF">NCU01414</name>
</gene>
<name>STUA_NEUCR</name>
<proteinExistence type="evidence at transcript level"/>
<feature type="chain" id="PRO_0000435980" description="Cell pattern formation-associated protein asm-1">
    <location>
        <begin position="1"/>
        <end position="643"/>
    </location>
</feature>
<feature type="domain" description="HTH APSES-type" evidence="2">
    <location>
        <begin position="116"/>
        <end position="222"/>
    </location>
</feature>
<feature type="DNA-binding region" description="H-T-H motif" evidence="2">
    <location>
        <begin position="150"/>
        <end position="171"/>
    </location>
</feature>
<feature type="region of interest" description="Disordered" evidence="3">
    <location>
        <begin position="1"/>
        <end position="37"/>
    </location>
</feature>
<feature type="region of interest" description="Disordered" evidence="3">
    <location>
        <begin position="229"/>
        <end position="627"/>
    </location>
</feature>
<feature type="region of interest" description="Nuclear localization domain" evidence="1">
    <location>
        <begin position="583"/>
        <end position="612"/>
    </location>
</feature>
<feature type="compositionally biased region" description="Polar residues" evidence="3">
    <location>
        <begin position="13"/>
        <end position="33"/>
    </location>
</feature>
<feature type="compositionally biased region" description="Polar residues" evidence="3">
    <location>
        <begin position="306"/>
        <end position="335"/>
    </location>
</feature>
<feature type="compositionally biased region" description="Low complexity" evidence="3">
    <location>
        <begin position="336"/>
        <end position="349"/>
    </location>
</feature>
<feature type="compositionally biased region" description="Polar residues" evidence="3">
    <location>
        <begin position="350"/>
        <end position="367"/>
    </location>
</feature>
<feature type="compositionally biased region" description="Low complexity" evidence="3">
    <location>
        <begin position="368"/>
        <end position="391"/>
    </location>
</feature>
<feature type="compositionally biased region" description="Polar residues" evidence="3">
    <location>
        <begin position="471"/>
        <end position="481"/>
    </location>
</feature>
<feature type="compositionally biased region" description="Polar residues" evidence="3">
    <location>
        <begin position="529"/>
        <end position="551"/>
    </location>
</feature>
<feature type="compositionally biased region" description="Polar residues" evidence="3">
    <location>
        <begin position="563"/>
        <end position="577"/>
    </location>
</feature>
<accession>Q1K6U0</accession>
<dbReference type="EMBL" id="CM002240">
    <property type="protein sequence ID" value="EAA31601.1"/>
    <property type="molecule type" value="Genomic_DNA"/>
</dbReference>
<dbReference type="RefSeq" id="XP_960837.1">
    <property type="nucleotide sequence ID" value="XM_955744.3"/>
</dbReference>
<dbReference type="SMR" id="Q1K6U0"/>
<dbReference type="STRING" id="367110.Q1K6U0"/>
<dbReference type="PaxDb" id="5141-EFNCRP00000004057"/>
<dbReference type="EnsemblFungi" id="EAA31601">
    <property type="protein sequence ID" value="EAA31601"/>
    <property type="gene ID" value="NCU01414"/>
</dbReference>
<dbReference type="GeneID" id="3876984"/>
<dbReference type="KEGG" id="ncr:NCU01414"/>
<dbReference type="VEuPathDB" id="FungiDB:NCU01414"/>
<dbReference type="HOGENOM" id="CLU_016460_0_0_1"/>
<dbReference type="InParanoid" id="Q1K6U0"/>
<dbReference type="OMA" id="HEAEYTH"/>
<dbReference type="OrthoDB" id="5407653at2759"/>
<dbReference type="Proteomes" id="UP000001805">
    <property type="component" value="Chromosome 2, Linkage Group V"/>
</dbReference>
<dbReference type="GO" id="GO:0005634">
    <property type="term" value="C:nucleus"/>
    <property type="evidence" value="ECO:0007669"/>
    <property type="project" value="UniProtKB-SubCell"/>
</dbReference>
<dbReference type="GO" id="GO:0003677">
    <property type="term" value="F:DNA binding"/>
    <property type="evidence" value="ECO:0007669"/>
    <property type="project" value="UniProtKB-KW"/>
</dbReference>
<dbReference type="GO" id="GO:0048315">
    <property type="term" value="P:conidium formation"/>
    <property type="evidence" value="ECO:0007669"/>
    <property type="project" value="UniProtKB-KW"/>
</dbReference>
<dbReference type="GO" id="GO:0030435">
    <property type="term" value="P:sporulation resulting in formation of a cellular spore"/>
    <property type="evidence" value="ECO:0007669"/>
    <property type="project" value="UniProtKB-KW"/>
</dbReference>
<dbReference type="FunFam" id="3.10.260.10:FF:000003">
    <property type="entry name" value="Ascospore maturation 1 protein"/>
    <property type="match status" value="1"/>
</dbReference>
<dbReference type="Gene3D" id="3.10.260.10">
    <property type="entry name" value="Transcription regulator HTH, APSES-type DNA-binding domain"/>
    <property type="match status" value="1"/>
</dbReference>
<dbReference type="InterPro" id="IPR029790">
    <property type="entry name" value="EFG1/Phd1/StuA"/>
</dbReference>
<dbReference type="InterPro" id="IPR036887">
    <property type="entry name" value="HTH_APSES_sf"/>
</dbReference>
<dbReference type="InterPro" id="IPR018004">
    <property type="entry name" value="KilA/APSES_HTH"/>
</dbReference>
<dbReference type="InterPro" id="IPR003163">
    <property type="entry name" value="Tscrpt_reg_HTH_APSES-type"/>
</dbReference>
<dbReference type="PANTHER" id="PTHR47792">
    <property type="entry name" value="PROTEIN SOK2-RELATED"/>
    <property type="match status" value="1"/>
</dbReference>
<dbReference type="PANTHER" id="PTHR47792:SF1">
    <property type="entry name" value="PROTEIN SOK2-RELATED"/>
    <property type="match status" value="1"/>
</dbReference>
<dbReference type="Pfam" id="PF04383">
    <property type="entry name" value="KilA-N"/>
    <property type="match status" value="1"/>
</dbReference>
<dbReference type="SMART" id="SM01252">
    <property type="entry name" value="KilA-N"/>
    <property type="match status" value="1"/>
</dbReference>
<dbReference type="SUPFAM" id="SSF54616">
    <property type="entry name" value="DNA-binding domain of Mlu1-box binding protein MBP1"/>
    <property type="match status" value="1"/>
</dbReference>
<dbReference type="PROSITE" id="PS51299">
    <property type="entry name" value="HTH_APSES"/>
    <property type="match status" value="1"/>
</dbReference>
<organism>
    <name type="scientific">Neurospora crassa (strain ATCC 24698 / 74-OR23-1A / CBS 708.71 / DSM 1257 / FGSC 987)</name>
    <dbReference type="NCBI Taxonomy" id="367110"/>
    <lineage>
        <taxon>Eukaryota</taxon>
        <taxon>Fungi</taxon>
        <taxon>Dikarya</taxon>
        <taxon>Ascomycota</taxon>
        <taxon>Pezizomycotina</taxon>
        <taxon>Sordariomycetes</taxon>
        <taxon>Sordariomycetidae</taxon>
        <taxon>Sordariales</taxon>
        <taxon>Sordariaceae</taxon>
        <taxon>Neurospora</taxon>
    </lineage>
</organism>
<sequence>MNPNTPADVYYGQMSQGSSMPVTTVPSHSHYASQQPPPLLQPGSTYAHQYGTPQYGYANALSSPASIPPSLPPSMNSMAGQSVLPLPGSGSMNPAVYASGGFDTTGQVAPPGMKPRVTATLWEDEGSLCFQVEARGICVARREDNAMINGTKLLNVAGMTRGRRDGILKSEKVRHVVKIGPMHLKGVWIPFERALDFANKEKITELLYPLFVHNIGALLYHPTNQSRTSQVMAAAEQRRKDSHGQLRGPPGLPSLQQHHHHHSMLPGPPSLPSHPSMGRPALDRAHTFPTPPTSASSVMGPMGNSDGYQWSQQSMSGTQGNSSLSLDTSLGSNARSMPSTPATTPPGSTIQSMQNYPPVSQSYESSRQMYQGQSAQQAQYQSQQHYSSQPQHQERPVYSQSSYIKNDMGPPSGRPTGQSNDASDSKPPTGMIHQGQGQSDPGTHAGSEEDDDANNEAEYTHDSGGYDANRGSYNYNTQAVNSLPHDHGLAPEIGGSPHQAGSGRATPRTAAAPSSYYSAQGYHTPPRGQPSSSLYNVMSNERTGSNGTQGNEMYAGQADMPSSLPNGYSAQPSVMNGSSGGLKRGRDDDDDGGRPTTSAPNLGPGMDMKRRKTMMDGGSLPSPTYTATIAQAAPSAIAAHRRR</sequence>
<evidence type="ECO:0000250" key="1">
    <source>
        <dbReference type="UniProtKB" id="P36011"/>
    </source>
</evidence>
<evidence type="ECO:0000255" key="2">
    <source>
        <dbReference type="PROSITE-ProRule" id="PRU00630"/>
    </source>
</evidence>
<evidence type="ECO:0000256" key="3">
    <source>
        <dbReference type="SAM" id="MobiDB-lite"/>
    </source>
</evidence>
<evidence type="ECO:0000269" key="4">
    <source>
    </source>
</evidence>
<evidence type="ECO:0000269" key="5">
    <source>
    </source>
</evidence>
<evidence type="ECO:0000303" key="6">
    <source>
    </source>
</evidence>
<evidence type="ECO:0000305" key="7"/>
<reference key="1">
    <citation type="journal article" date="2003" name="Nature">
        <title>The genome sequence of the filamentous fungus Neurospora crassa.</title>
        <authorList>
            <person name="Galagan J.E."/>
            <person name="Calvo S.E."/>
            <person name="Borkovich K.A."/>
            <person name="Selker E.U."/>
            <person name="Read N.D."/>
            <person name="Jaffe D.B."/>
            <person name="FitzHugh W."/>
            <person name="Ma L.-J."/>
            <person name="Smirnov S."/>
            <person name="Purcell S."/>
            <person name="Rehman B."/>
            <person name="Elkins T."/>
            <person name="Engels R."/>
            <person name="Wang S."/>
            <person name="Nielsen C.B."/>
            <person name="Butler J."/>
            <person name="Endrizzi M."/>
            <person name="Qui D."/>
            <person name="Ianakiev P."/>
            <person name="Bell-Pedersen D."/>
            <person name="Nelson M.A."/>
            <person name="Werner-Washburne M."/>
            <person name="Selitrennikoff C.P."/>
            <person name="Kinsey J.A."/>
            <person name="Braun E.L."/>
            <person name="Zelter A."/>
            <person name="Schulte U."/>
            <person name="Kothe G.O."/>
            <person name="Jedd G."/>
            <person name="Mewes H.-W."/>
            <person name="Staben C."/>
            <person name="Marcotte E."/>
            <person name="Greenberg D."/>
            <person name="Roy A."/>
            <person name="Foley K."/>
            <person name="Naylor J."/>
            <person name="Stange-Thomann N."/>
            <person name="Barrett R."/>
            <person name="Gnerre S."/>
            <person name="Kamal M."/>
            <person name="Kamvysselis M."/>
            <person name="Mauceli E.W."/>
            <person name="Bielke C."/>
            <person name="Rudd S."/>
            <person name="Frishman D."/>
            <person name="Krystofova S."/>
            <person name="Rasmussen C."/>
            <person name="Metzenberg R.L."/>
            <person name="Perkins D.D."/>
            <person name="Kroken S."/>
            <person name="Cogoni C."/>
            <person name="Macino G."/>
            <person name="Catcheside D.E.A."/>
            <person name="Li W."/>
            <person name="Pratt R.J."/>
            <person name="Osmani S.A."/>
            <person name="DeSouza C.P.C."/>
            <person name="Glass N.L."/>
            <person name="Orbach M.J."/>
            <person name="Berglund J.A."/>
            <person name="Voelker R."/>
            <person name="Yarden O."/>
            <person name="Plamann M."/>
            <person name="Seiler S."/>
            <person name="Dunlap J.C."/>
            <person name="Radford A."/>
            <person name="Aramayo R."/>
            <person name="Natvig D.O."/>
            <person name="Alex L.A."/>
            <person name="Mannhaupt G."/>
            <person name="Ebbole D.J."/>
            <person name="Freitag M."/>
            <person name="Paulsen I."/>
            <person name="Sachs M.S."/>
            <person name="Lander E.S."/>
            <person name="Nusbaum C."/>
            <person name="Birren B.W."/>
        </authorList>
    </citation>
    <scope>NUCLEOTIDE SEQUENCE [LARGE SCALE GENOMIC DNA]</scope>
    <source>
        <strain>ATCC 24698 / 74-OR23-1A / CBS 708.71 / DSM 1257 / FGSC 987</strain>
    </source>
</reference>
<reference key="2">
    <citation type="journal article" date="1996" name="Genetics">
        <title>Asm-1+, a Neurospora crassa gene related to transcriptional regulators of fungal development.</title>
        <authorList>
            <person name="Aramayo R."/>
            <person name="Peleg Y."/>
            <person name="Addison R."/>
            <person name="Metzenberg R."/>
        </authorList>
    </citation>
    <scope>INDUCTION</scope>
    <scope>DISRUPTION PHENOTYPE</scope>
    <scope>FUNCTION</scope>
    <scope>SUBCELLULAR LOCATION</scope>
</reference>
<reference key="3">
    <citation type="journal article" date="2015" name="Mycologia">
        <title>Neurospora crassa ASM-1 complements the conidiation defect in a stuA mutant of Aspergillus nidulans.</title>
        <authorList>
            <person name="Chung D."/>
            <person name="Upadhyay S."/>
            <person name="Bomer B."/>
            <person name="Wilkinson H.H."/>
            <person name="Ebbole D.J."/>
            <person name="Shaw B.D."/>
        </authorList>
    </citation>
    <scope>FUNCTION</scope>
</reference>